<proteinExistence type="inferred from homology"/>
<name>TRPB_PSEPW</name>
<sequence>MTQSQYRPGPDANGLFGSFGGRYVAETLMPLVLDLAREYEAAKADPKFLEELAYFQRDYIGRPNPLYFAERLTEHCGGAKIFFKREELNHTGAHKVNNCIGQVLLAKRMGKKRLIAETGAGMHGVATATVAARFGLPCVIYMGATDIERQQANVFRMKLLGAEIVPVTAGTGTLKDAMNEALRDWVTNVDDTFYLIGTVAGPHPYPAMVRDFQSIIGKETRAQLQEKEGRLPDSLIACVGGGSNAMGLFHEFLEDESVKIIGVEAGGHGVNTGKHAASLNGGVPGVLHGNRTYLLQDDDGQITDAHSISAGLDYPGIGPEHAYLHEVKRVEYVSITDDEALDAFHATCRLEGIIPALETSHALAEAIKRAPNLPKDHLMVICLSGRGDKDMQTVMNHMAAQEKQA</sequence>
<organism>
    <name type="scientific">Pseudomonas putida (strain W619)</name>
    <dbReference type="NCBI Taxonomy" id="390235"/>
    <lineage>
        <taxon>Bacteria</taxon>
        <taxon>Pseudomonadati</taxon>
        <taxon>Pseudomonadota</taxon>
        <taxon>Gammaproteobacteria</taxon>
        <taxon>Pseudomonadales</taxon>
        <taxon>Pseudomonadaceae</taxon>
        <taxon>Pseudomonas</taxon>
    </lineage>
</organism>
<protein>
    <recommendedName>
        <fullName evidence="1">Tryptophan synthase beta chain</fullName>
        <ecNumber evidence="1">4.2.1.20</ecNumber>
    </recommendedName>
</protein>
<evidence type="ECO:0000255" key="1">
    <source>
        <dbReference type="HAMAP-Rule" id="MF_00133"/>
    </source>
</evidence>
<keyword id="KW-0028">Amino-acid biosynthesis</keyword>
<keyword id="KW-0057">Aromatic amino acid biosynthesis</keyword>
<keyword id="KW-0456">Lyase</keyword>
<keyword id="KW-0663">Pyridoxal phosphate</keyword>
<keyword id="KW-0822">Tryptophan biosynthesis</keyword>
<reference key="1">
    <citation type="submission" date="2008-02" db="EMBL/GenBank/DDBJ databases">
        <title>Complete sequence of Pseudomonas putida W619.</title>
        <authorList>
            <person name="Copeland A."/>
            <person name="Lucas S."/>
            <person name="Lapidus A."/>
            <person name="Barry K."/>
            <person name="Detter J.C."/>
            <person name="Glavina del Rio T."/>
            <person name="Dalin E."/>
            <person name="Tice H."/>
            <person name="Pitluck S."/>
            <person name="Chain P."/>
            <person name="Malfatti S."/>
            <person name="Shin M."/>
            <person name="Vergez L."/>
            <person name="Schmutz J."/>
            <person name="Larimer F."/>
            <person name="Land M."/>
            <person name="Hauser L."/>
            <person name="Kyrpides N."/>
            <person name="Kim E."/>
            <person name="Taghavi S."/>
            <person name="Vangronsveld D."/>
            <person name="van der Lelie D."/>
            <person name="Richardson P."/>
        </authorList>
    </citation>
    <scope>NUCLEOTIDE SEQUENCE [LARGE SCALE GENOMIC DNA]</scope>
    <source>
        <strain>W619</strain>
    </source>
</reference>
<comment type="function">
    <text evidence="1">The beta subunit is responsible for the synthesis of L-tryptophan from indole and L-serine.</text>
</comment>
<comment type="catalytic activity">
    <reaction evidence="1">
        <text>(1S,2R)-1-C-(indol-3-yl)glycerol 3-phosphate + L-serine = D-glyceraldehyde 3-phosphate + L-tryptophan + H2O</text>
        <dbReference type="Rhea" id="RHEA:10532"/>
        <dbReference type="ChEBI" id="CHEBI:15377"/>
        <dbReference type="ChEBI" id="CHEBI:33384"/>
        <dbReference type="ChEBI" id="CHEBI:57912"/>
        <dbReference type="ChEBI" id="CHEBI:58866"/>
        <dbReference type="ChEBI" id="CHEBI:59776"/>
        <dbReference type="EC" id="4.2.1.20"/>
    </reaction>
</comment>
<comment type="cofactor">
    <cofactor evidence="1">
        <name>pyridoxal 5'-phosphate</name>
        <dbReference type="ChEBI" id="CHEBI:597326"/>
    </cofactor>
</comment>
<comment type="pathway">
    <text evidence="1">Amino-acid biosynthesis; L-tryptophan biosynthesis; L-tryptophan from chorismate: step 5/5.</text>
</comment>
<comment type="subunit">
    <text evidence="1">Tetramer of two alpha and two beta chains.</text>
</comment>
<comment type="similarity">
    <text evidence="1">Belongs to the TrpB family.</text>
</comment>
<accession>B1J4B1</accession>
<dbReference type="EC" id="4.2.1.20" evidence="1"/>
<dbReference type="EMBL" id="CP000949">
    <property type="protein sequence ID" value="ACA70607.1"/>
    <property type="molecule type" value="Genomic_DNA"/>
</dbReference>
<dbReference type="SMR" id="B1J4B1"/>
<dbReference type="STRING" id="390235.PputW619_0101"/>
<dbReference type="KEGG" id="ppw:PputW619_0101"/>
<dbReference type="eggNOG" id="COG0133">
    <property type="taxonomic scope" value="Bacteria"/>
</dbReference>
<dbReference type="HOGENOM" id="CLU_016734_3_1_6"/>
<dbReference type="OrthoDB" id="9766131at2"/>
<dbReference type="UniPathway" id="UPA00035">
    <property type="reaction ID" value="UER00044"/>
</dbReference>
<dbReference type="GO" id="GO:0005737">
    <property type="term" value="C:cytoplasm"/>
    <property type="evidence" value="ECO:0007669"/>
    <property type="project" value="TreeGrafter"/>
</dbReference>
<dbReference type="GO" id="GO:0004834">
    <property type="term" value="F:tryptophan synthase activity"/>
    <property type="evidence" value="ECO:0007669"/>
    <property type="project" value="UniProtKB-UniRule"/>
</dbReference>
<dbReference type="CDD" id="cd06446">
    <property type="entry name" value="Trp-synth_B"/>
    <property type="match status" value="1"/>
</dbReference>
<dbReference type="FunFam" id="3.40.50.1100:FF:000001">
    <property type="entry name" value="Tryptophan synthase beta chain"/>
    <property type="match status" value="1"/>
</dbReference>
<dbReference type="FunFam" id="3.40.50.1100:FF:000004">
    <property type="entry name" value="Tryptophan synthase beta chain"/>
    <property type="match status" value="1"/>
</dbReference>
<dbReference type="Gene3D" id="3.40.50.1100">
    <property type="match status" value="2"/>
</dbReference>
<dbReference type="HAMAP" id="MF_00133">
    <property type="entry name" value="Trp_synth_beta"/>
    <property type="match status" value="1"/>
</dbReference>
<dbReference type="InterPro" id="IPR006653">
    <property type="entry name" value="Trp_synth_b_CS"/>
</dbReference>
<dbReference type="InterPro" id="IPR006654">
    <property type="entry name" value="Trp_synth_beta"/>
</dbReference>
<dbReference type="InterPro" id="IPR023026">
    <property type="entry name" value="Trp_synth_beta/beta-like"/>
</dbReference>
<dbReference type="InterPro" id="IPR001926">
    <property type="entry name" value="TrpB-like_PALP"/>
</dbReference>
<dbReference type="InterPro" id="IPR036052">
    <property type="entry name" value="TrpB-like_PALP_sf"/>
</dbReference>
<dbReference type="NCBIfam" id="TIGR00263">
    <property type="entry name" value="trpB"/>
    <property type="match status" value="1"/>
</dbReference>
<dbReference type="PANTHER" id="PTHR48077:SF3">
    <property type="entry name" value="TRYPTOPHAN SYNTHASE"/>
    <property type="match status" value="1"/>
</dbReference>
<dbReference type="PANTHER" id="PTHR48077">
    <property type="entry name" value="TRYPTOPHAN SYNTHASE-RELATED"/>
    <property type="match status" value="1"/>
</dbReference>
<dbReference type="Pfam" id="PF00291">
    <property type="entry name" value="PALP"/>
    <property type="match status" value="1"/>
</dbReference>
<dbReference type="PIRSF" id="PIRSF001413">
    <property type="entry name" value="Trp_syn_beta"/>
    <property type="match status" value="1"/>
</dbReference>
<dbReference type="SUPFAM" id="SSF53686">
    <property type="entry name" value="Tryptophan synthase beta subunit-like PLP-dependent enzymes"/>
    <property type="match status" value="1"/>
</dbReference>
<dbReference type="PROSITE" id="PS00168">
    <property type="entry name" value="TRP_SYNTHASE_BETA"/>
    <property type="match status" value="1"/>
</dbReference>
<gene>
    <name evidence="1" type="primary">trpB</name>
    <name type="ordered locus">PputW619_0101</name>
</gene>
<feature type="chain" id="PRO_1000095804" description="Tryptophan synthase beta chain">
    <location>
        <begin position="1"/>
        <end position="405"/>
    </location>
</feature>
<feature type="modified residue" description="N6-(pyridoxal phosphate)lysine" evidence="1">
    <location>
        <position position="95"/>
    </location>
</feature>